<comment type="function">
    <text evidence="1">Binds directly to 23S ribosomal RNA and is necessary for the in vitro assembly process of the 50S ribosomal subunit. It is not involved in the protein synthesizing functions of that subunit.</text>
</comment>
<comment type="similarity">
    <text evidence="1">Belongs to the bacterial ribosomal protein bL20 family.</text>
</comment>
<accession>B7GZZ9</accession>
<evidence type="ECO:0000255" key="1">
    <source>
        <dbReference type="HAMAP-Rule" id="MF_00382"/>
    </source>
</evidence>
<evidence type="ECO:0000305" key="2"/>
<proteinExistence type="inferred from homology"/>
<protein>
    <recommendedName>
        <fullName evidence="1">Large ribosomal subunit protein bL20</fullName>
    </recommendedName>
    <alternativeName>
        <fullName evidence="2">50S ribosomal protein L20</fullName>
    </alternativeName>
</protein>
<sequence length="119" mass="13437">MARVKRGVVAHRRHKKILARAKGYYGARSRVYRVAFQAVIKAGQYAYRDRRQKKRQFRALWIARINAGARQNGLSYSRMIDGLKKAQVIIDRRVLADIAMHDAVAFAALAEKAKGALAA</sequence>
<dbReference type="EMBL" id="CP001172">
    <property type="protein sequence ID" value="ACJ58295.1"/>
    <property type="molecule type" value="Genomic_DNA"/>
</dbReference>
<dbReference type="RefSeq" id="WP_000124858.1">
    <property type="nucleotide sequence ID" value="NZ_CP001172.1"/>
</dbReference>
<dbReference type="SMR" id="B7GZZ9"/>
<dbReference type="GeneID" id="9383733"/>
<dbReference type="HOGENOM" id="CLU_123265_0_1_6"/>
<dbReference type="Proteomes" id="UP000006924">
    <property type="component" value="Chromosome"/>
</dbReference>
<dbReference type="GO" id="GO:1990904">
    <property type="term" value="C:ribonucleoprotein complex"/>
    <property type="evidence" value="ECO:0007669"/>
    <property type="project" value="UniProtKB-KW"/>
</dbReference>
<dbReference type="GO" id="GO:0005840">
    <property type="term" value="C:ribosome"/>
    <property type="evidence" value="ECO:0007669"/>
    <property type="project" value="UniProtKB-KW"/>
</dbReference>
<dbReference type="GO" id="GO:0019843">
    <property type="term" value="F:rRNA binding"/>
    <property type="evidence" value="ECO:0007669"/>
    <property type="project" value="UniProtKB-UniRule"/>
</dbReference>
<dbReference type="GO" id="GO:0003735">
    <property type="term" value="F:structural constituent of ribosome"/>
    <property type="evidence" value="ECO:0007669"/>
    <property type="project" value="InterPro"/>
</dbReference>
<dbReference type="GO" id="GO:0000027">
    <property type="term" value="P:ribosomal large subunit assembly"/>
    <property type="evidence" value="ECO:0007669"/>
    <property type="project" value="UniProtKB-UniRule"/>
</dbReference>
<dbReference type="GO" id="GO:0006412">
    <property type="term" value="P:translation"/>
    <property type="evidence" value="ECO:0007669"/>
    <property type="project" value="InterPro"/>
</dbReference>
<dbReference type="CDD" id="cd07026">
    <property type="entry name" value="Ribosomal_L20"/>
    <property type="match status" value="1"/>
</dbReference>
<dbReference type="FunFam" id="1.10.1900.20:FF:000001">
    <property type="entry name" value="50S ribosomal protein L20"/>
    <property type="match status" value="1"/>
</dbReference>
<dbReference type="Gene3D" id="6.10.160.10">
    <property type="match status" value="1"/>
</dbReference>
<dbReference type="Gene3D" id="1.10.1900.20">
    <property type="entry name" value="Ribosomal protein L20"/>
    <property type="match status" value="1"/>
</dbReference>
<dbReference type="HAMAP" id="MF_00382">
    <property type="entry name" value="Ribosomal_bL20"/>
    <property type="match status" value="1"/>
</dbReference>
<dbReference type="InterPro" id="IPR005813">
    <property type="entry name" value="Ribosomal_bL20"/>
</dbReference>
<dbReference type="InterPro" id="IPR049946">
    <property type="entry name" value="RIBOSOMAL_L20_CS"/>
</dbReference>
<dbReference type="InterPro" id="IPR035566">
    <property type="entry name" value="Ribosomal_protein_bL20_C"/>
</dbReference>
<dbReference type="NCBIfam" id="TIGR01032">
    <property type="entry name" value="rplT_bact"/>
    <property type="match status" value="1"/>
</dbReference>
<dbReference type="PANTHER" id="PTHR10986">
    <property type="entry name" value="39S RIBOSOMAL PROTEIN L20"/>
    <property type="match status" value="1"/>
</dbReference>
<dbReference type="Pfam" id="PF00453">
    <property type="entry name" value="Ribosomal_L20"/>
    <property type="match status" value="1"/>
</dbReference>
<dbReference type="PRINTS" id="PR00062">
    <property type="entry name" value="RIBOSOMALL20"/>
</dbReference>
<dbReference type="SUPFAM" id="SSF74731">
    <property type="entry name" value="Ribosomal protein L20"/>
    <property type="match status" value="1"/>
</dbReference>
<dbReference type="PROSITE" id="PS00937">
    <property type="entry name" value="RIBOSOMAL_L20"/>
    <property type="match status" value="1"/>
</dbReference>
<feature type="chain" id="PRO_1000122255" description="Large ribosomal subunit protein bL20">
    <location>
        <begin position="1"/>
        <end position="119"/>
    </location>
</feature>
<gene>
    <name evidence="1" type="primary">rplT</name>
    <name type="ordered locus">ABBFA_002963</name>
</gene>
<name>RL20_ACIB3</name>
<keyword id="KW-0687">Ribonucleoprotein</keyword>
<keyword id="KW-0689">Ribosomal protein</keyword>
<keyword id="KW-0694">RNA-binding</keyword>
<keyword id="KW-0699">rRNA-binding</keyword>
<reference key="1">
    <citation type="journal article" date="2008" name="J. Bacteriol.">
        <title>Comparative genome sequence analysis of multidrug-resistant Acinetobacter baumannii.</title>
        <authorList>
            <person name="Adams M.D."/>
            <person name="Goglin K."/>
            <person name="Molyneaux N."/>
            <person name="Hujer K.M."/>
            <person name="Lavender H."/>
            <person name="Jamison J.J."/>
            <person name="MacDonald I.J."/>
            <person name="Martin K.M."/>
            <person name="Russo T."/>
            <person name="Campagnari A.A."/>
            <person name="Hujer A.M."/>
            <person name="Bonomo R.A."/>
            <person name="Gill S.R."/>
        </authorList>
    </citation>
    <scope>NUCLEOTIDE SEQUENCE [LARGE SCALE GENOMIC DNA]</scope>
    <source>
        <strain>AB307-0294</strain>
    </source>
</reference>
<organism>
    <name type="scientific">Acinetobacter baumannii (strain AB307-0294)</name>
    <dbReference type="NCBI Taxonomy" id="557600"/>
    <lineage>
        <taxon>Bacteria</taxon>
        <taxon>Pseudomonadati</taxon>
        <taxon>Pseudomonadota</taxon>
        <taxon>Gammaproteobacteria</taxon>
        <taxon>Moraxellales</taxon>
        <taxon>Moraxellaceae</taxon>
        <taxon>Acinetobacter</taxon>
        <taxon>Acinetobacter calcoaceticus/baumannii complex</taxon>
    </lineage>
</organism>